<keyword id="KW-0539">Nucleus</keyword>
<keyword id="KW-0597">Phosphoprotein</keyword>
<keyword id="KW-0694">RNA-binding</keyword>
<keyword id="KW-0804">Transcription</keyword>
<keyword id="KW-0805">Transcription regulation</keyword>
<proteinExistence type="evidence at transcript level"/>
<organism>
    <name type="scientific">Aplysia californica</name>
    <name type="common">California sea hare</name>
    <dbReference type="NCBI Taxonomy" id="6500"/>
    <lineage>
        <taxon>Eukaryota</taxon>
        <taxon>Metazoa</taxon>
        <taxon>Spiralia</taxon>
        <taxon>Lophotrochozoa</taxon>
        <taxon>Mollusca</taxon>
        <taxon>Gastropoda</taxon>
        <taxon>Heterobranchia</taxon>
        <taxon>Euthyneura</taxon>
        <taxon>Tectipleura</taxon>
        <taxon>Aplysiida</taxon>
        <taxon>Aplysioidea</taxon>
        <taxon>Aplysiidae</taxon>
        <taxon>Aplysia</taxon>
    </lineage>
</organism>
<sequence>MADTEKQPEVEENQPDQEQNEEQKEKKIIASQVSGTVKWFNVKSGYGFINRDDTKEDVFVHQTAIVKNNPRKYLRSVGDGEKVEFDVVEGEKGNEAANVTGPEGSNVQGSKYAADRRRFRRGGWYPRFRGGGRGGRPRQDMDDGAPDFMPSPRGRGRGRPYYQNRRYFGPPRRGGGRQYLEGEGEYQLQRDQGFRGARRPFYRPLLRTTSQGLLRRWLLRLPRRTTQGRTSQARRRERPWGLPQRQRPKPRQR</sequence>
<name>YBOXH_APLCA</name>
<feature type="chain" id="PRO_0000100229" description="Y-box factor homolog">
    <location>
        <begin position="1"/>
        <end position="253"/>
    </location>
</feature>
<feature type="domain" description="CSD">
    <location>
        <begin position="35"/>
        <end position="99"/>
    </location>
</feature>
<feature type="region of interest" description="Disordered" evidence="3">
    <location>
        <begin position="1"/>
        <end position="26"/>
    </location>
</feature>
<feature type="region of interest" description="Disordered" evidence="3">
    <location>
        <begin position="124"/>
        <end position="178"/>
    </location>
</feature>
<feature type="region of interest" description="Disordered" evidence="3">
    <location>
        <begin position="224"/>
        <end position="253"/>
    </location>
</feature>
<feature type="compositionally biased region" description="Acidic residues" evidence="3">
    <location>
        <begin position="10"/>
        <end position="20"/>
    </location>
</feature>
<feature type="compositionally biased region" description="Low complexity" evidence="3">
    <location>
        <begin position="159"/>
        <end position="171"/>
    </location>
</feature>
<feature type="modified residue" description="Phosphothreonine; by PKA" evidence="2">
    <location>
        <position position="226"/>
    </location>
</feature>
<evidence type="ECO:0000250" key="1"/>
<evidence type="ECO:0000255" key="2"/>
<evidence type="ECO:0000256" key="3">
    <source>
        <dbReference type="SAM" id="MobiDB-lite"/>
    </source>
</evidence>
<evidence type="ECO:0000305" key="4"/>
<reference key="1">
    <citation type="journal article" date="1994" name="Gene">
        <title>Characterization of a Y-Box factor from Aplysia californica.</title>
        <authorList>
            <person name="Skehel P.A."/>
            <person name="Bartsch D."/>
        </authorList>
    </citation>
    <scope>NUCLEOTIDE SEQUENCE [MRNA]</scope>
</reference>
<accession>P41824</accession>
<comment type="function">
    <text>Binds RNA in vitro.</text>
</comment>
<comment type="subcellular location">
    <subcellularLocation>
        <location evidence="4">Nucleus</location>
    </subcellularLocation>
</comment>
<comment type="PTM">
    <text evidence="1">Phosphorylation activates in vitro RNA binding.</text>
</comment>
<dbReference type="EMBL" id="U02684">
    <property type="protein sequence ID" value="AAA60373.1"/>
    <property type="molecule type" value="mRNA"/>
</dbReference>
<dbReference type="RefSeq" id="NP_001191560.1">
    <property type="nucleotide sequence ID" value="NM_001204631.1"/>
</dbReference>
<dbReference type="SMR" id="P41824"/>
<dbReference type="EnsemblMetazoa" id="NM_001204631.1">
    <property type="protein sequence ID" value="NP_001191560.1"/>
    <property type="gene ID" value="LOC100533335"/>
</dbReference>
<dbReference type="GeneID" id="100533335"/>
<dbReference type="OrthoDB" id="203339at2759"/>
<dbReference type="Proteomes" id="UP000694888">
    <property type="component" value="Unplaced"/>
</dbReference>
<dbReference type="GO" id="GO:0005634">
    <property type="term" value="C:nucleus"/>
    <property type="evidence" value="ECO:0007669"/>
    <property type="project" value="UniProtKB-SubCell"/>
</dbReference>
<dbReference type="GO" id="GO:0003723">
    <property type="term" value="F:RNA binding"/>
    <property type="evidence" value="ECO:0007669"/>
    <property type="project" value="UniProtKB-KW"/>
</dbReference>
<dbReference type="CDD" id="cd04458">
    <property type="entry name" value="CSP_CDS"/>
    <property type="match status" value="1"/>
</dbReference>
<dbReference type="FunFam" id="2.40.50.140:FF:000054">
    <property type="entry name" value="Nuclease-sensitive element-binding protein 1"/>
    <property type="match status" value="1"/>
</dbReference>
<dbReference type="Gene3D" id="2.40.50.140">
    <property type="entry name" value="Nucleic acid-binding proteins"/>
    <property type="match status" value="1"/>
</dbReference>
<dbReference type="InterPro" id="IPR050181">
    <property type="entry name" value="Cold_shock_domain"/>
</dbReference>
<dbReference type="InterPro" id="IPR011129">
    <property type="entry name" value="CSD"/>
</dbReference>
<dbReference type="InterPro" id="IPR019844">
    <property type="entry name" value="CSD_CS"/>
</dbReference>
<dbReference type="InterPro" id="IPR002059">
    <property type="entry name" value="CSP_DNA-bd"/>
</dbReference>
<dbReference type="InterPro" id="IPR012340">
    <property type="entry name" value="NA-bd_OB-fold"/>
</dbReference>
<dbReference type="PANTHER" id="PTHR11544">
    <property type="entry name" value="COLD SHOCK DOMAIN CONTAINING PROTEINS"/>
    <property type="match status" value="1"/>
</dbReference>
<dbReference type="Pfam" id="PF00313">
    <property type="entry name" value="CSD"/>
    <property type="match status" value="1"/>
</dbReference>
<dbReference type="PRINTS" id="PR00050">
    <property type="entry name" value="COLDSHOCK"/>
</dbReference>
<dbReference type="SMART" id="SM00357">
    <property type="entry name" value="CSP"/>
    <property type="match status" value="1"/>
</dbReference>
<dbReference type="SUPFAM" id="SSF50249">
    <property type="entry name" value="Nucleic acid-binding proteins"/>
    <property type="match status" value="1"/>
</dbReference>
<dbReference type="PROSITE" id="PS00352">
    <property type="entry name" value="CSD_1"/>
    <property type="match status" value="1"/>
</dbReference>
<dbReference type="PROSITE" id="PS51857">
    <property type="entry name" value="CSD_2"/>
    <property type="match status" value="1"/>
</dbReference>
<protein>
    <recommendedName>
        <fullName>Y-box factor homolog</fullName>
    </recommendedName>
    <alternativeName>
        <fullName>APY1</fullName>
    </alternativeName>
</protein>